<reference key="1">
    <citation type="journal article" date="2005" name="J. Bacteriol.">
        <title>Insights on evolution of virulence and resistance from the complete genome analysis of an early methicillin-resistant Staphylococcus aureus strain and a biofilm-producing methicillin-resistant Staphylococcus epidermidis strain.</title>
        <authorList>
            <person name="Gill S.R."/>
            <person name="Fouts D.E."/>
            <person name="Archer G.L."/>
            <person name="Mongodin E.F."/>
            <person name="DeBoy R.T."/>
            <person name="Ravel J."/>
            <person name="Paulsen I.T."/>
            <person name="Kolonay J.F."/>
            <person name="Brinkac L.M."/>
            <person name="Beanan M.J."/>
            <person name="Dodson R.J."/>
            <person name="Daugherty S.C."/>
            <person name="Madupu R."/>
            <person name="Angiuoli S.V."/>
            <person name="Durkin A.S."/>
            <person name="Haft D.H."/>
            <person name="Vamathevan J.J."/>
            <person name="Khouri H."/>
            <person name="Utterback T.R."/>
            <person name="Lee C."/>
            <person name="Dimitrov G."/>
            <person name="Jiang L."/>
            <person name="Qin H."/>
            <person name="Weidman J."/>
            <person name="Tran K."/>
            <person name="Kang K.H."/>
            <person name="Hance I.R."/>
            <person name="Nelson K.E."/>
            <person name="Fraser C.M."/>
        </authorList>
    </citation>
    <scope>NUCLEOTIDE SEQUENCE [LARGE SCALE GENOMIC DNA]</scope>
    <source>
        <strain>COL</strain>
    </source>
</reference>
<protein>
    <recommendedName>
        <fullName>Conserved virulence factor C</fullName>
    </recommendedName>
</protein>
<gene>
    <name type="primary">cvfC</name>
    <name type="ordered locus">SACOL1465</name>
</gene>
<proteinExistence type="inferred from homology"/>
<sequence length="374" mass="42923">MEILRIEPTPSPNTMKVVLSYTREDKLSNTYKKVEETQPRFINQLLSIDGITSIFHVMNFLAVDKAPKADWEVILPDIKAAFSDANKVLESVNEPQIDNHFGEIKAELLTFKGIPYQIKLTSADQELREQLPQTYVDHMTQAQTAHDNIVFMRKWLDLGNRYGNIQEVMDGVLEEVLATYPESQLPVLVKHALEENHATNNYHFYRHVSLDEYHATDNWKTRLRMLNHFPKPTFEDIPLLDLALSDEKVPVRRQAIVLLGMIESKEILPYLYKGLRDKSPAVRRTAGDCISDLGYPEALPEMVLLLDDPQKIVRWRAAMFIFDEGNAEQLPALKAHINDNAFEVKLQIEMAISRIENGDEALGSVWKQMANRTI</sequence>
<comment type="function">
    <text evidence="1">Required for hemolysin production.</text>
</comment>
<comment type="similarity">
    <text evidence="2">Belongs to the CvfC family.</text>
</comment>
<dbReference type="EMBL" id="CP000046">
    <property type="protein sequence ID" value="AAW36665.1"/>
    <property type="molecule type" value="Genomic_DNA"/>
</dbReference>
<dbReference type="RefSeq" id="WP_000404650.1">
    <property type="nucleotide sequence ID" value="NZ_JBGOFO010000003.1"/>
</dbReference>
<dbReference type="SMR" id="Q5HFZ4"/>
<dbReference type="KEGG" id="sac:SACOL1465"/>
<dbReference type="HOGENOM" id="CLU_733295_0_0_9"/>
<dbReference type="PHI-base" id="PHI:2967"/>
<dbReference type="Proteomes" id="UP000000530">
    <property type="component" value="Chromosome"/>
</dbReference>
<dbReference type="GO" id="GO:0016491">
    <property type="term" value="F:oxidoreductase activity"/>
    <property type="evidence" value="ECO:0007669"/>
    <property type="project" value="TreeGrafter"/>
</dbReference>
<dbReference type="Gene3D" id="1.25.10.10">
    <property type="entry name" value="Leucine-rich Repeat Variant"/>
    <property type="match status" value="1"/>
</dbReference>
<dbReference type="Gene3D" id="3.30.1370.70">
    <property type="entry name" value="Scaffold protein Nfu/NifU, N-terminal domain"/>
    <property type="match status" value="1"/>
</dbReference>
<dbReference type="InterPro" id="IPR011989">
    <property type="entry name" value="ARM-like"/>
</dbReference>
<dbReference type="InterPro" id="IPR016024">
    <property type="entry name" value="ARM-type_fold"/>
</dbReference>
<dbReference type="InterPro" id="IPR014824">
    <property type="entry name" value="Nfu/NifU_N"/>
</dbReference>
<dbReference type="InterPro" id="IPR036498">
    <property type="entry name" value="Nfu/NifU_N_sf"/>
</dbReference>
<dbReference type="InterPro" id="IPR004155">
    <property type="entry name" value="PBS_lyase_HEAT"/>
</dbReference>
<dbReference type="InterPro" id="IPR025989">
    <property type="entry name" value="Virulence_F_dom"/>
</dbReference>
<dbReference type="PANTHER" id="PTHR12697:SF37">
    <property type="entry name" value="CONSERVED VIRULENCE FACTOR C"/>
    <property type="match status" value="1"/>
</dbReference>
<dbReference type="PANTHER" id="PTHR12697">
    <property type="entry name" value="PBS LYASE HEAT-LIKE PROTEIN"/>
    <property type="match status" value="1"/>
</dbReference>
<dbReference type="Pfam" id="PF13646">
    <property type="entry name" value="HEAT_2"/>
    <property type="match status" value="1"/>
</dbReference>
<dbReference type="Pfam" id="PF08712">
    <property type="entry name" value="Nfu_N"/>
    <property type="match status" value="1"/>
</dbReference>
<dbReference type="Pfam" id="PF13769">
    <property type="entry name" value="Virulence_fact"/>
    <property type="match status" value="1"/>
</dbReference>
<dbReference type="SMART" id="SM00567">
    <property type="entry name" value="EZ_HEAT"/>
    <property type="match status" value="3"/>
</dbReference>
<dbReference type="SMART" id="SM00932">
    <property type="entry name" value="Nfu_N"/>
    <property type="match status" value="1"/>
</dbReference>
<dbReference type="SUPFAM" id="SSF48371">
    <property type="entry name" value="ARM repeat"/>
    <property type="match status" value="1"/>
</dbReference>
<dbReference type="SUPFAM" id="SSF110836">
    <property type="entry name" value="Hypothetical protein SAV1430"/>
    <property type="match status" value="1"/>
</dbReference>
<feature type="chain" id="PRO_0000282303" description="Conserved virulence factor C">
    <location>
        <begin position="1"/>
        <end position="374"/>
    </location>
</feature>
<keyword id="KW-0843">Virulence</keyword>
<name>CVFC_STAAC</name>
<accession>Q5HFZ4</accession>
<organism>
    <name type="scientific">Staphylococcus aureus (strain COL)</name>
    <dbReference type="NCBI Taxonomy" id="93062"/>
    <lineage>
        <taxon>Bacteria</taxon>
        <taxon>Bacillati</taxon>
        <taxon>Bacillota</taxon>
        <taxon>Bacilli</taxon>
        <taxon>Bacillales</taxon>
        <taxon>Staphylococcaceae</taxon>
        <taxon>Staphylococcus</taxon>
    </lineage>
</organism>
<evidence type="ECO:0000250" key="1"/>
<evidence type="ECO:0000305" key="2"/>